<feature type="signal peptide" evidence="1">
    <location>
        <begin position="1"/>
        <end position="21"/>
    </location>
</feature>
<feature type="chain" id="PRO_5013522507" description="RxLR effector protein Avr3a">
    <location>
        <begin position="22"/>
        <end position="147"/>
    </location>
</feature>
<feature type="region of interest" description="Effector domain" evidence="21">
    <location>
        <begin position="77"/>
        <end position="147"/>
    </location>
</feature>
<feature type="short sequence motif" description="RxLR-dEER" evidence="20">
    <location>
        <begin position="44"/>
        <end position="59"/>
    </location>
</feature>
<feature type="site" description="Cleavage" evidence="14">
    <location>
        <begin position="47"/>
        <end position="48"/>
    </location>
</feature>
<feature type="modified residue" description="N6-acetyllysine" evidence="14">
    <location>
        <position position="48"/>
    </location>
</feature>
<feature type="mutagenesis site" description="Prevents delivery of Avr3a into host cells." evidence="4">
    <original>RLLR</original>
    <variation>AAAA</variation>
    <location>
        <begin position="44"/>
        <end position="47"/>
    </location>
</feature>
<feature type="mutagenesis site" description="Prevents delivery of Avr3a into host cells." evidence="4">
    <original>EER</original>
    <variation>AAA</variation>
    <location>
        <begin position="57"/>
        <end position="59"/>
    </location>
</feature>
<feature type="mutagenesis site" description="Does not affect PIP-binding." evidence="9">
    <original>R</original>
    <variation>E</variation>
    <location>
        <position position="81"/>
    </location>
</feature>
<feature type="mutagenesis site" description="Reduces the PIP-binding ability." evidence="9">
    <original>K</original>
    <variation>E</variation>
    <location>
        <position position="85"/>
    </location>
</feature>
<feature type="mutagenesis site" description="Does not affect PIP-binding." evidence="9">
    <original>K</original>
    <variation>E</variation>
    <location>
        <position position="86"/>
    </location>
</feature>
<feature type="mutagenesis site" description="Reduces the PIP-binding ability." evidence="9">
    <original>K</original>
    <variation>E</variation>
    <location>
        <position position="89"/>
    </location>
</feature>
<feature type="mutagenesis site" description="Prevents the interaction with host CMPG1." evidence="7">
    <location>
        <position position="147"/>
    </location>
</feature>
<feature type="turn" evidence="23">
    <location>
        <begin position="75"/>
        <end position="77"/>
    </location>
</feature>
<feature type="helix" evidence="23">
    <location>
        <begin position="82"/>
        <end position="93"/>
    </location>
</feature>
<feature type="helix" evidence="23">
    <location>
        <begin position="95"/>
        <end position="107"/>
    </location>
</feature>
<feature type="helix" evidence="23">
    <location>
        <begin position="112"/>
        <end position="122"/>
    </location>
</feature>
<feature type="strand" evidence="23">
    <location>
        <begin position="125"/>
        <end position="127"/>
    </location>
</feature>
<feature type="helix" evidence="23">
    <location>
        <begin position="131"/>
        <end position="142"/>
    </location>
</feature>
<keyword id="KW-0002">3D-structure</keyword>
<keyword id="KW-0007">Acetylation</keyword>
<keyword id="KW-0325">Glycoprotein</keyword>
<keyword id="KW-1035">Host cytoplasm</keyword>
<keyword id="KW-1039">Host endosome</keyword>
<keyword id="KW-0964">Secreted</keyword>
<keyword id="KW-0732">Signal</keyword>
<keyword id="KW-0843">Virulence</keyword>
<proteinExistence type="evidence at protein level"/>
<organism>
    <name type="scientific">Phytophthora infestans</name>
    <name type="common">Potato late blight agent</name>
    <name type="synonym">Botrytis infestans</name>
    <dbReference type="NCBI Taxonomy" id="4787"/>
    <lineage>
        <taxon>Eukaryota</taxon>
        <taxon>Sar</taxon>
        <taxon>Stramenopiles</taxon>
        <taxon>Oomycota</taxon>
        <taxon>Peronosporales</taxon>
        <taxon>Peronosporaceae</taxon>
        <taxon>Phytophthora</taxon>
    </lineage>
</organism>
<sequence length="147" mass="16658">MRLAIMLSATAVAINFATCSAIDQTKVLVYGTPAHYIHDSAGRRLLRKNEENEETSEERAPNFNLANLNEEMFNVAALTKRADAKKLAKQLMGNDKLADAAYIWWQHNRVTLDQIDTFLKLASRKTQGAKYNQIYNSYMMHLGLTGY</sequence>
<comment type="function">
    <text evidence="2 3 5 6 7 8 12">Multifunctional effector that can suppress host BAK1/SERK3-mediated immunity through at least two different pathways (PubMed:19794118, PubMed:20457921, PubMed:21348873, PubMed:26348328). Manipulates plant immunity by targeting and stabilizing host E3 ligase CMPG1. Preventing the normal 26S proteasome-dependent degradation of potato CMPG1, and thus potentially of its protein substrates in the host cell, further abolishes host cell death during the biotrophic phase of infection (PubMed:19794118, PubMed:20457921, PubMed:21348873). Also associates with the dynamin-related protein 2 (DRP2), a plant GTPase involved in immune receptor-mediated endocytosis (PubMed:26348328). The Avr3A(KI) form is recognized by R3a which triggers R3a-mediated hypersensitivity and suppresses INF1-induced cell death (PubMed:15894622, PubMed:16965554, PubMed:19245321).</text>
</comment>
<comment type="subunit">
    <text evidence="7 10 12 14">Forms homodimers via the RxLR-dEER motif (PubMed:22977236, PubMed:28522546). Interacts with host E3 ligase CMPG1 (PubMed:20457921). Interacts with host DRP2 (PubMed:26348328).</text>
</comment>
<comment type="subcellular location">
    <subcellularLocation>
        <location evidence="2 3 4 15">Secreted</location>
    </subcellularLocation>
    <subcellularLocation>
        <location evidence="2 3 4 15">Host cytoplasm</location>
    </subcellularLocation>
    <subcellularLocation>
        <location evidence="11">Host endosome</location>
    </subcellularLocation>
    <text evidence="11">Avr3A(KI), but not Avr3A(EM), is relocalized to endosomes in the presence of R3a.</text>
</comment>
<comment type="induction">
    <text evidence="13 15">Expression is induced during host plant infection.</text>
</comment>
<comment type="domain">
    <text evidence="4 9 10 14">The RxLR-dEER motif is required for the delivery of the effector to the host cell cytoplasm but does not bind phosphatidylinositol monophosphates (PubMed:17914356, PubMed:21821794, PubMed:22977236). The motif is cleaved after the RxLR sequence (PubMed:28522546). The RxLR motif (residues 44 to 47) plays a crucial role in the intracellular processing before secretion (PubMed:28522546). The Glu-rich part localized just after the cleavage site (residues 48 to 59) is required for homodimerization (PubMed:28522546).</text>
</comment>
<comment type="domain">
    <text evidence="9">The conserved, positively charged effector domain (residues 77 to 147), rather than the RXLR domain, is required for binding to phosphatidylinositol monophosphates (PIPs). PIP binding is necessary for accumulation of CMPG1 and Avr3a in host plants.</text>
</comment>
<comment type="PTM">
    <text evidence="14">Proteolytically cleaved. The cleavage site directly after the RxLR sequence and the high conservation among other effector proteins suggest that the RxLR motif might play a crucial role in the intracellular processing before secretion.</text>
</comment>
<comment type="PTM">
    <text evidence="14">glycosylated.</text>
</comment>
<comment type="PTM">
    <text evidence="14">N-acetylated at Lys-48 after cleavage.</text>
</comment>
<comment type="miscellaneous">
    <text evidence="2 3">The AVR3a protein of Phytophthora infestans is a polymorphic member of the RXLR class of cytoplasmic effectors with dual functions. Avr3A(KI) but not Avr3a(EM) activates innate immunity triggered by the potato resistance protein R3a and is a strong suppressor of the cell-death response induced by INF1 elicitin, a secreted P.infestans protein that has features of pathogen-associated molecular patterns. The 2 polymorphic residues between AVR3a(KI) and Avr3a(EM) are localized at positions 80 and 103, respectively.</text>
</comment>
<comment type="similarity">
    <text evidence="19">Belongs to the RxLR effector family.</text>
</comment>
<dbReference type="EMBL" id="GU258055">
    <property type="protein sequence ID" value="ADC96694.1"/>
    <property type="molecule type" value="Genomic_DNA"/>
</dbReference>
<dbReference type="EMBL" id="KF154426">
    <property type="protein sequence ID" value="AGV54930.1"/>
    <property type="molecule type" value="Genomic_DNA"/>
</dbReference>
<dbReference type="EMBL" id="KP317568">
    <property type="protein sequence ID" value="AKH40249.1"/>
    <property type="molecule type" value="Genomic_DNA"/>
</dbReference>
<dbReference type="PDB" id="2NAR">
    <property type="method" value="NMR"/>
    <property type="chains" value="A=61-147"/>
</dbReference>
<dbReference type="PDBsum" id="2NAR"/>
<dbReference type="SMR" id="E2DWQ7"/>
<dbReference type="iPTMnet" id="E2DWQ7"/>
<dbReference type="VEuPathDB" id="FungiDB:PITG_14371"/>
<dbReference type="GO" id="GO:0005576">
    <property type="term" value="C:extracellular region"/>
    <property type="evidence" value="ECO:0007669"/>
    <property type="project" value="UniProtKB-SubCell"/>
</dbReference>
<dbReference type="GO" id="GO:0044174">
    <property type="term" value="C:host cell endosome"/>
    <property type="evidence" value="ECO:0007669"/>
    <property type="project" value="UniProtKB-SubCell"/>
</dbReference>
<dbReference type="Gene3D" id="1.10.10.2460">
    <property type="match status" value="1"/>
</dbReference>
<dbReference type="InterPro" id="IPR031825">
    <property type="entry name" value="RXLR"/>
</dbReference>
<dbReference type="Pfam" id="PF16810">
    <property type="entry name" value="RXLR"/>
    <property type="match status" value="1"/>
</dbReference>
<evidence type="ECO:0000255" key="1"/>
<evidence type="ECO:0000269" key="2">
    <source>
    </source>
</evidence>
<evidence type="ECO:0000269" key="3">
    <source>
    </source>
</evidence>
<evidence type="ECO:0000269" key="4">
    <source>
    </source>
</evidence>
<evidence type="ECO:0000269" key="5">
    <source>
    </source>
</evidence>
<evidence type="ECO:0000269" key="6">
    <source>
    </source>
</evidence>
<evidence type="ECO:0000269" key="7">
    <source>
    </source>
</evidence>
<evidence type="ECO:0000269" key="8">
    <source>
    </source>
</evidence>
<evidence type="ECO:0000269" key="9">
    <source>
    </source>
</evidence>
<evidence type="ECO:0000269" key="10">
    <source>
    </source>
</evidence>
<evidence type="ECO:0000269" key="11">
    <source>
    </source>
</evidence>
<evidence type="ECO:0000269" key="12">
    <source>
    </source>
</evidence>
<evidence type="ECO:0000269" key="13">
    <source>
    </source>
</evidence>
<evidence type="ECO:0000269" key="14">
    <source>
    </source>
</evidence>
<evidence type="ECO:0000269" key="15">
    <source>
    </source>
</evidence>
<evidence type="ECO:0000303" key="16">
    <source>
    </source>
</evidence>
<evidence type="ECO:0000303" key="17">
    <source>
    </source>
</evidence>
<evidence type="ECO:0000303" key="18">
    <source>
    </source>
</evidence>
<evidence type="ECO:0000305" key="19"/>
<evidence type="ECO:0000305" key="20">
    <source>
    </source>
</evidence>
<evidence type="ECO:0000305" key="21">
    <source>
    </source>
</evidence>
<evidence type="ECO:0007744" key="22">
    <source>
        <dbReference type="PDB" id="2NAR"/>
    </source>
</evidence>
<evidence type="ECO:0007829" key="23">
    <source>
        <dbReference type="PDB" id="2NAR"/>
    </source>
</evidence>
<gene>
    <name evidence="16" type="primary">Avr3a</name>
    <name evidence="18" type="synonym">Avr3A(KI)</name>
</gene>
<accession>E2DWQ7</accession>
<reference key="1">
    <citation type="journal article" date="2011" name="BMC Genet.">
        <title>Genetic diversity of Phytophthora infestans in the Northern Andean region.</title>
        <authorList>
            <person name="Cardenas M."/>
            <person name="Grajales A."/>
            <person name="Sierra R."/>
            <person name="Rojas A."/>
            <person name="Gonzalez-Almario A."/>
            <person name="Vargas A."/>
            <person name="Marin M."/>
            <person name="Fermin G."/>
            <person name="Lagos L.E."/>
            <person name="Grunwald N.J."/>
            <person name="Bernal A."/>
            <person name="Salazar C."/>
            <person name="Restrepo S."/>
        </authorList>
    </citation>
    <scope>NUCLEOTIDE SEQUENCE [GENOMIC DNA]</scope>
</reference>
<reference key="2">
    <citation type="journal article" date="2012" name="PPO Spec. Rep.">
        <title>Are simple Phytophthora infestans races really that simple?</title>
        <authorList>
            <person name="Pankin A.A."/>
            <person name="Kinash E.A."/>
            <person name="Kozlovskaya I.N."/>
            <person name="Kuznetsova M.A."/>
            <person name="Khavkin E.E."/>
        </authorList>
    </citation>
    <scope>NUCLEOTIDE SEQUENCE [GENOMIC DNA]</scope>
    <source>
        <strain>Race 1.2.3</strain>
    </source>
</reference>
<reference key="3">
    <citation type="journal article" date="2014" name="Russ. Agricult. Sci.">
        <title>On molecular identification of Phytophthora infestans genotypes.</title>
        <authorList>
            <person name="Beketova M."/>
            <person name="Sokolova E."/>
            <person name="Malyuchenko O."/>
            <person name="Alekseev Y."/>
            <person name="Kuznetsova M."/>
            <person name="Kozlovsky B."/>
            <person name="Rogozina E."/>
            <person name="Khavkin E."/>
        </authorList>
    </citation>
    <scope>NUCLEOTIDE SEQUENCE [GENOMIC DNA]</scope>
</reference>
<reference key="4">
    <citation type="journal article" date="2005" name="Proc. Natl. Acad. Sci. U.S.A.">
        <title>An ancestral oomycete locus contains late blight avirulence gene Avr3a, encoding a protein that is recognized in the host cytoplasm.</title>
        <authorList>
            <person name="Armstrong M.R."/>
            <person name="Whisson S.C."/>
            <person name="Pritchard L."/>
            <person name="Bos J.I."/>
            <person name="Venter E."/>
            <person name="Avrova A.O."/>
            <person name="Rehmany A.P."/>
            <person name="Boehme U."/>
            <person name="Brooks K."/>
            <person name="Cherevach I."/>
            <person name="Hamlin N."/>
            <person name="White B."/>
            <person name="Fraser A."/>
            <person name="Lord A."/>
            <person name="Quail M.A."/>
            <person name="Churcher C."/>
            <person name="Hall N."/>
            <person name="Berriman M."/>
            <person name="Huang S."/>
            <person name="Kamoun S."/>
            <person name="Beynon J.L."/>
            <person name="Birch P.R."/>
        </authorList>
    </citation>
    <scope>FUNCTION</scope>
    <scope>SUBCELLULAR LOCATION</scope>
</reference>
<reference key="5">
    <citation type="journal article" date="2006" name="Plant J.">
        <title>The C-terminal half of Phytophthora infestans RXLR effector AVR3a is sufficient to trigger R3a-mediated hypersensitivity and suppress INF1-induced cell death in Nicotiana benthamiana.</title>
        <authorList>
            <person name="Bos J.I."/>
            <person name="Kanneganti T.D."/>
            <person name="Young C."/>
            <person name="Cakir C."/>
            <person name="Huitema E."/>
            <person name="Win J."/>
            <person name="Armstrong M.R."/>
            <person name="Birch P.R."/>
            <person name="Kamoun S."/>
        </authorList>
    </citation>
    <scope>FUNCTION</scope>
    <scope>DOMAIN</scope>
</reference>
<reference key="6">
    <citation type="journal article" date="2007" name="Nature">
        <title>A translocation signal for delivery of oomycete effector proteins into host plant cells.</title>
        <authorList>
            <person name="Whisson S.C."/>
            <person name="Boevink P.C."/>
            <person name="Moleleki L."/>
            <person name="Avrova A.O."/>
            <person name="Morales J.G."/>
            <person name="Gilroy E.M."/>
            <person name="Armstrong M.R."/>
            <person name="Grouffaud S."/>
            <person name="van West P."/>
            <person name="Chapman S."/>
            <person name="Hein I."/>
            <person name="Toth I.K."/>
            <person name="Pritchard L."/>
            <person name="Birch P.R."/>
        </authorList>
    </citation>
    <scope>DOMAIN</scope>
    <scope>SUBCELLULAR LOCATION</scope>
    <scope>MUTAGENESIS OF 44-ARG--ARG-49 AND 57-GLU--ARG-59</scope>
</reference>
<reference key="7">
    <citation type="journal article" date="2009" name="Plant Cell">
        <title>In planta expression screens of Phytophthora infestans RXLR effectors reveal diverse phenotypes, including activation of the Solanum bulbocastanum disease resistance protein Rpi-blb2.</title>
        <authorList>
            <person name="Oh S.K."/>
            <person name="Young C."/>
            <person name="Lee M."/>
            <person name="Oliva R."/>
            <person name="Bozkurt T.O."/>
            <person name="Cano L.M."/>
            <person name="Win J."/>
            <person name="Bos J.I."/>
            <person name="Liu H.Y."/>
            <person name="van Damme M."/>
            <person name="Morgan W."/>
            <person name="Choi D."/>
            <person name="Van der Vossen E.A."/>
            <person name="Vleeshouwers V.G."/>
            <person name="Kamoun S."/>
        </authorList>
    </citation>
    <scope>FUNCTION</scope>
</reference>
<reference key="8">
    <citation type="journal article" date="2009" name="Mol. Plant Microbe Interact.">
        <title>Distinct amino acids of the Phytophthora infestans effector AVR3a condition activation of R3a hypersensitivity and suppression of cell death.</title>
        <authorList>
            <person name="Bos J.I."/>
            <person name="Chaparro-Garcia A."/>
            <person name="Quesada-Ocampo L.M."/>
            <person name="McSpadden Gardener B.B."/>
            <person name="Kamoun S."/>
        </authorList>
    </citation>
    <scope>FUNCTION</scope>
</reference>
<reference key="9">
    <citation type="journal article" date="2010" name="Proc. Natl. Acad. Sci. U.S.A.">
        <title>Phytophthora infestans effector AVR3a is essential for virulence and manipulates plant immunity by stabilizing host E3 ligase CMPG1.</title>
        <authorList>
            <person name="Bos J.I."/>
            <person name="Armstrong M.R."/>
            <person name="Gilroy E.M."/>
            <person name="Boevink P.C."/>
            <person name="Hein I."/>
            <person name="Taylor R.M."/>
            <person name="Zhendong T."/>
            <person name="Engelhardt S."/>
            <person name="Vetukuri R.R."/>
            <person name="Harrower B."/>
            <person name="Dixelius C."/>
            <person name="Bryan G."/>
            <person name="Sadanandom A."/>
            <person name="Whisson S.C."/>
            <person name="Kamoun S."/>
            <person name="Birch P.R."/>
        </authorList>
    </citation>
    <scope>FUNCTION</scope>
    <scope>INTERACTION WITH HOST E3 LIGASE CMPG1</scope>
    <scope>MUTAGENESIS OF TYR-147</scope>
</reference>
<reference key="10">
    <citation type="journal article" date="2011" name="New Phytol.">
        <title>CMPG1-dependent cell death follows perception of diverse pathogen elicitors at the host plasma membrane and is suppressed by Phytophthora infestans RXLR effector AVR3a.</title>
        <authorList>
            <person name="Gilroy E.M."/>
            <person name="Taylor R.M."/>
            <person name="Hein I."/>
            <person name="Boevink P."/>
            <person name="Sadanandom A."/>
            <person name="Birch P.R."/>
        </authorList>
    </citation>
    <scope>FUNCTION</scope>
</reference>
<reference key="11">
    <citation type="journal article" date="2011" name="Proc. Natl. Acad. Sci. U.S.A.">
        <title>Phosphatidylinositol monophosphate-binding interface in the oomycete RXLR effector AVR3a is required for its stability in host cells to modulate plant immunity.</title>
        <authorList>
            <person name="Yaeno T."/>
            <person name="Li H."/>
            <person name="Chaparro-Garcia A."/>
            <person name="Schornack S."/>
            <person name="Koshiba S."/>
            <person name="Watanabe S."/>
            <person name="Kigawa T."/>
            <person name="Kamoun S."/>
            <person name="Shirasu K."/>
        </authorList>
    </citation>
    <scope>DOMAIN</scope>
    <scope>MUTAGENESIS OF ARG-81; LYS-85; LYS-86 AND LYS-89</scope>
    <scope>PHOSPHATIDYLINOSITOL MONOPHOSPHATE-BINDING</scope>
</reference>
<reference key="12">
    <citation type="journal article" date="2012" name="J. Biol. Chem.">
        <title>Avirulence protein 3a (AVR3a) from the potato pathogen Phytophthora infestans forms homodimers through its predicted translocation region and does not specifically bind phospholipids.</title>
        <authorList>
            <person name="Wawra S."/>
            <person name="Agacan M."/>
            <person name="Boddey J.A."/>
            <person name="Davidson I."/>
            <person name="Gachon C.M."/>
            <person name="Zanda M."/>
            <person name="Grouffaud S."/>
            <person name="Whisson S.C."/>
            <person name="Birch P.R."/>
            <person name="Porter A.J."/>
            <person name="van West P."/>
        </authorList>
    </citation>
    <scope>DOMAIN</scope>
    <scope>SUBUNIT</scope>
</reference>
<reference key="13">
    <citation type="journal article" date="2012" name="Plant Cell">
        <title>Relocalization of late blight resistance protein R3a to endosomal compartments is associated with effector recognition and required for the immune response.</title>
        <authorList>
            <person name="Engelhardt S."/>
            <person name="Boevink P.C."/>
            <person name="Armstrong M.R."/>
            <person name="Ramos M.B."/>
            <person name="Hein I."/>
            <person name="Birch P.R."/>
        </authorList>
    </citation>
    <scope>SUBCELLULAR LOCATION</scope>
</reference>
<reference key="14">
    <citation type="journal article" date="2015" name="PLoS ONE">
        <title>Phytophthora infestans RXLR-WY Effector AVR3a Associates with Dynamin-Related Protein 2 Required for Endocytosis of the Plant Pattern Recognition Receptor FLS2.</title>
        <authorList>
            <person name="Chaparro-Garcia A."/>
            <person name="Schwizer S."/>
            <person name="Sklenar J."/>
            <person name="Yoshida K."/>
            <person name="Petre B."/>
            <person name="Bos J.I."/>
            <person name="Schornack S."/>
            <person name="Jones A.M."/>
            <person name="Bozkurt T.O."/>
            <person name="Kamoun S."/>
        </authorList>
    </citation>
    <scope>FUNCTION</scope>
    <scope>INTERACTION WITH DRP2</scope>
</reference>
<reference key="15">
    <citation type="journal article" date="2017" name="BMC Genomics">
        <title>RNA-seq of life stages of the oomycete Phytophthora infestans reveals dynamic changes in metabolic, signal transduction, and pathogenesis genes and a major role for calcium signaling in development.</title>
        <authorList>
            <person name="Ah-Fong A.M."/>
            <person name="Kim K.S."/>
            <person name="Judelson H.S."/>
        </authorList>
    </citation>
    <scope>INDUCTION</scope>
</reference>
<reference key="16">
    <citation type="journal article" date="2017" name="Front. Plant Sci.">
        <title>Conserved RXLR effector genes of Phytophthora infestans expressed at the early stage of potato infection are suppressive to host defense.</title>
        <authorList>
            <person name="Yin J."/>
            <person name="Gu B."/>
            <person name="Huang G."/>
            <person name="Tian Y."/>
            <person name="Quan J."/>
            <person name="Lindqvist-Kreuze H."/>
            <person name="Shan W."/>
        </authorList>
    </citation>
    <scope>INDUCTION</scope>
    <scope>SUBCELLULAR LOCATION</scope>
</reference>
<reference evidence="22" key="17">
    <citation type="journal article" date="2017" name="Plant Cell">
        <title>The RxLR motif of the host targeting effector AVR3a of Phytophthora infestans is cleaved before secretion.</title>
        <authorList>
            <person name="Wawra S."/>
            <person name="Trusch F."/>
            <person name="Matena A."/>
            <person name="Apostolakis K."/>
            <person name="Linne U."/>
            <person name="Zhukov I."/>
            <person name="Stanek J."/>
            <person name="Kozminski W."/>
            <person name="Davidson I."/>
            <person name="Secombes C.J."/>
            <person name="Bayer P."/>
            <person name="van West P."/>
        </authorList>
    </citation>
    <scope>STRUCTURE BY NMR OF 61-147</scope>
    <scope>CLEAVAGE</scope>
    <scope>ACETYLATION AT LYS-48</scope>
    <scope>SUBUNIT</scope>
    <scope>GLYCOSYLATION</scope>
</reference>
<name>A3AKI_PHYIN</name>
<protein>
    <recommendedName>
        <fullName evidence="17">RxLR effector protein Avr3a</fullName>
    </recommendedName>
    <alternativeName>
        <fullName evidence="16">Avirulence protein 3a</fullName>
    </alternativeName>
</protein>